<organism>
    <name type="scientific">Saccharomyces cerevisiae (strain ATCC 204508 / S288c)</name>
    <name type="common">Baker's yeast</name>
    <dbReference type="NCBI Taxonomy" id="559292"/>
    <lineage>
        <taxon>Eukaryota</taxon>
        <taxon>Fungi</taxon>
        <taxon>Dikarya</taxon>
        <taxon>Ascomycota</taxon>
        <taxon>Saccharomycotina</taxon>
        <taxon>Saccharomycetes</taxon>
        <taxon>Saccharomycetales</taxon>
        <taxon>Saccharomycetaceae</taxon>
        <taxon>Saccharomyces</taxon>
    </lineage>
</organism>
<feature type="chain" id="PRO_0000204753" description="Carboxypeptidase Y inhibitor">
    <location>
        <begin position="1"/>
        <end position="219"/>
    </location>
</feature>
<feature type="modified residue" description="N-acetylmethionine" evidence="1">
    <location>
        <position position="1"/>
    </location>
</feature>
<feature type="sequence conflict" description="In Ref. 2; CAA44015." evidence="4" ref="2">
    <original>K</original>
    <variation>N</variation>
    <location>
        <position position="56"/>
    </location>
</feature>
<feature type="sequence conflict" description="In Ref. 1; CAA33456." evidence="4" ref="1">
    <original>F</original>
    <variation>L</variation>
    <location>
        <position position="165"/>
    </location>
</feature>
<feature type="sequence conflict" description="In Ref. 1." evidence="4" ref="1">
    <original>SNFFYAETK</original>
    <variation>VQFLLCGNEIGIYIYICICIYFLDFSAFHLTFYYFCFIYVFVTNGQMFVGTNVYVKQNT</variation>
    <location>
        <begin position="211"/>
        <end position="219"/>
    </location>
</feature>
<feature type="helix" evidence="5">
    <location>
        <begin position="2"/>
        <end position="4"/>
    </location>
</feature>
<feature type="helix" evidence="5">
    <location>
        <begin position="7"/>
        <end position="17"/>
    </location>
</feature>
<feature type="helix" evidence="5">
    <location>
        <begin position="20"/>
        <end position="23"/>
    </location>
</feature>
<feature type="strand" evidence="5">
    <location>
        <begin position="33"/>
        <end position="41"/>
    </location>
</feature>
<feature type="strand" evidence="5">
    <location>
        <begin position="44"/>
        <end position="46"/>
    </location>
</feature>
<feature type="helix" evidence="5">
    <location>
        <begin position="54"/>
        <end position="57"/>
    </location>
</feature>
<feature type="strand" evidence="5">
    <location>
        <begin position="62"/>
        <end position="68"/>
    </location>
</feature>
<feature type="strand" evidence="5">
    <location>
        <begin position="89"/>
        <end position="99"/>
    </location>
</feature>
<feature type="strand" evidence="5">
    <location>
        <begin position="108"/>
        <end position="119"/>
    </location>
</feature>
<feature type="strand" evidence="5">
    <location>
        <begin position="133"/>
        <end position="139"/>
    </location>
</feature>
<feature type="strand" evidence="5">
    <location>
        <begin position="144"/>
        <end position="147"/>
    </location>
</feature>
<feature type="strand" evidence="5">
    <location>
        <begin position="161"/>
        <end position="169"/>
    </location>
</feature>
<feature type="helix" evidence="5">
    <location>
        <begin position="176"/>
        <end position="178"/>
    </location>
</feature>
<feature type="helix" evidence="5">
    <location>
        <begin position="187"/>
        <end position="189"/>
    </location>
</feature>
<feature type="strand" evidence="5">
    <location>
        <begin position="192"/>
        <end position="194"/>
    </location>
</feature>
<feature type="helix" evidence="5">
    <location>
        <begin position="197"/>
        <end position="202"/>
    </location>
</feature>
<feature type="turn" evidence="5">
    <location>
        <begin position="203"/>
        <end position="205"/>
    </location>
</feature>
<feature type="strand" evidence="5">
    <location>
        <begin position="207"/>
        <end position="216"/>
    </location>
</feature>
<reference key="1">
    <citation type="journal article" date="1989" name="Mol. Microbiol.">
        <title>Cloning and characterization of NSP1, a locus encoding a component of a CDC25-dependent, nutrient-responsive pathway in Saccharomyces cerevisiae.</title>
        <authorList>
            <person name="Tripp M.L."/>
            <person name="Bouchard R.A."/>
            <person name="Pinon R."/>
        </authorList>
    </citation>
    <scope>NUCLEOTIDE SEQUENCE [GENOMIC DNA]</scope>
    <source>
        <strain>X241</strain>
    </source>
</reference>
<reference key="2">
    <citation type="journal article" date="1991" name="Mol. Gen. Genet.">
        <title>TFS1: a suppressor of cdc25 mutations in Saccharomyces cerevisiae.</title>
        <authorList>
            <person name="Robinson L.C."/>
            <person name="Tatchell K."/>
        </authorList>
    </citation>
    <scope>NUCLEOTIDE SEQUENCE [GENOMIC DNA]</scope>
</reference>
<reference key="3">
    <citation type="journal article" date="1997" name="Nature">
        <title>The nucleotide sequence of Saccharomyces cerevisiae chromosome XII.</title>
        <authorList>
            <person name="Johnston M."/>
            <person name="Hillier L.W."/>
            <person name="Riles L."/>
            <person name="Albermann K."/>
            <person name="Andre B."/>
            <person name="Ansorge W."/>
            <person name="Benes V."/>
            <person name="Brueckner M."/>
            <person name="Delius H."/>
            <person name="Dubois E."/>
            <person name="Duesterhoeft A."/>
            <person name="Entian K.-D."/>
            <person name="Floeth M."/>
            <person name="Goffeau A."/>
            <person name="Hebling U."/>
            <person name="Heumann K."/>
            <person name="Heuss-Neitzel D."/>
            <person name="Hilbert H."/>
            <person name="Hilger F."/>
            <person name="Kleine K."/>
            <person name="Koetter P."/>
            <person name="Louis E.J."/>
            <person name="Messenguy F."/>
            <person name="Mewes H.-W."/>
            <person name="Miosga T."/>
            <person name="Moestl D."/>
            <person name="Mueller-Auer S."/>
            <person name="Nentwich U."/>
            <person name="Obermaier B."/>
            <person name="Piravandi E."/>
            <person name="Pohl T.M."/>
            <person name="Portetelle D."/>
            <person name="Purnelle B."/>
            <person name="Rechmann S."/>
            <person name="Rieger M."/>
            <person name="Rinke M."/>
            <person name="Rose M."/>
            <person name="Scharfe M."/>
            <person name="Scherens B."/>
            <person name="Scholler P."/>
            <person name="Schwager C."/>
            <person name="Schwarz S."/>
            <person name="Underwood A.P."/>
            <person name="Urrestarazu L.A."/>
            <person name="Vandenbol M."/>
            <person name="Verhasselt P."/>
            <person name="Vierendeels F."/>
            <person name="Voet M."/>
            <person name="Volckaert G."/>
            <person name="Voss H."/>
            <person name="Wambutt R."/>
            <person name="Wedler E."/>
            <person name="Wedler H."/>
            <person name="Zimmermann F.K."/>
            <person name="Zollner A."/>
            <person name="Hani J."/>
            <person name="Hoheisel J.D."/>
        </authorList>
    </citation>
    <scope>NUCLEOTIDE SEQUENCE [LARGE SCALE GENOMIC DNA]</scope>
    <source>
        <strain>ATCC 204508 / S288c</strain>
    </source>
</reference>
<reference key="4">
    <citation type="journal article" date="2014" name="G3 (Bethesda)">
        <title>The reference genome sequence of Saccharomyces cerevisiae: Then and now.</title>
        <authorList>
            <person name="Engel S.R."/>
            <person name="Dietrich F.S."/>
            <person name="Fisk D.G."/>
            <person name="Binkley G."/>
            <person name="Balakrishnan R."/>
            <person name="Costanzo M.C."/>
            <person name="Dwight S.S."/>
            <person name="Hitz B.C."/>
            <person name="Karra K."/>
            <person name="Nash R.S."/>
            <person name="Weng S."/>
            <person name="Wong E.D."/>
            <person name="Lloyd P."/>
            <person name="Skrzypek M.S."/>
            <person name="Miyasato S.R."/>
            <person name="Simison M."/>
            <person name="Cherry J.M."/>
        </authorList>
    </citation>
    <scope>GENOME REANNOTATION</scope>
    <source>
        <strain>ATCC 204508 / S288c</strain>
    </source>
</reference>
<reference key="5">
    <citation type="journal article" date="1998" name="Biochemistry">
        <title>A high-affinity inhibitor of yeast carboxypeptidase Y is encoded by TFS1 and shows homology to a family of lipid binding proteins.</title>
        <authorList>
            <person name="Bruun A.W."/>
            <person name="Svendsen I."/>
            <person name="Sorensen S.O."/>
            <person name="Kielland-Brandt M.C."/>
            <person name="Winther J.R."/>
        </authorList>
    </citation>
    <scope>FUNCTION</scope>
</reference>
<reference key="6">
    <citation type="journal article" date="2002" name="J. Biochem.">
        <title>Overexpression and functional characterization of a serine carboxypeptidase inhibitor (I(C)) from Saccharomyces cerevisiae.</title>
        <authorList>
            <person name="Mima J."/>
            <person name="Suzuki H."/>
            <person name="Takahashi M."/>
            <person name="Hayashi R."/>
        </authorList>
    </citation>
    <scope>CHARACTERIZATION</scope>
    <scope>ACETYLATION AT MET-1</scope>
</reference>
<reference key="7">
    <citation type="journal article" date="2002" name="FEBS Lett.">
        <title>N-terminal acetyl group is essential for the inhibitory function of carboxypeptidase Y inhibitor (I(C)).</title>
        <authorList>
            <person name="Mima J."/>
            <person name="Kondo T."/>
            <person name="Hayashi R."/>
        </authorList>
    </citation>
    <scope>CHARACTERIZATION</scope>
</reference>
<reference key="8">
    <citation type="journal article" date="2003" name="Nature">
        <title>Global analysis of protein expression in yeast.</title>
        <authorList>
            <person name="Ghaemmaghami S."/>
            <person name="Huh W.-K."/>
            <person name="Bower K."/>
            <person name="Howson R.W."/>
            <person name="Belle A."/>
            <person name="Dephoure N."/>
            <person name="O'Shea E.K."/>
            <person name="Weissman J.S."/>
        </authorList>
    </citation>
    <scope>LEVEL OF PROTEIN EXPRESSION [LARGE SCALE ANALYSIS]</scope>
</reference>
<reference key="9">
    <citation type="journal article" date="2008" name="Mol. Cell. Proteomics">
        <title>A multidimensional chromatography technology for in-depth phosphoproteome analysis.</title>
        <authorList>
            <person name="Albuquerque C.P."/>
            <person name="Smolka M.B."/>
            <person name="Payne S.H."/>
            <person name="Bafna V."/>
            <person name="Eng J."/>
            <person name="Zhou H."/>
        </authorList>
    </citation>
    <scope>IDENTIFICATION BY MASS SPECTROMETRY [LARGE SCALE ANALYSIS]</scope>
</reference>
<accession>P14306</accession>
<accession>D6VYI2</accession>
<accession>P30312</accession>
<comment type="function">
    <text evidence="3">Specific and potent inhibitor of carboxypeptidase Y.</text>
</comment>
<comment type="subunit">
    <text>Monomer.</text>
</comment>
<comment type="interaction">
    <interactant intactId="EBI-5916">
        <id>P14306</id>
    </interactant>
    <interactant intactId="EBI-4153">
        <id>P00729</id>
        <label>PRC1</label>
    </interactant>
    <organismsDiffer>false</organismsDiffer>
    <experiments>2</experiments>
</comment>
<comment type="subcellular location">
    <subcellularLocation>
        <location>Cytoplasm</location>
    </subcellularLocation>
</comment>
<comment type="miscellaneous">
    <text evidence="2">Present with 1030 molecules/cell in log phase SD medium.</text>
</comment>
<comment type="similarity">
    <text evidence="4">Belongs to the phosphatidylethanolamine-binding protein family.</text>
</comment>
<protein>
    <recommendedName>
        <fullName>Carboxypeptidase Y inhibitor</fullName>
        <shortName>CPY inhibitor</shortName>
    </recommendedName>
    <alternativeName>
        <fullName>CDC25 suppressor 1</fullName>
    </alternativeName>
    <alternativeName>
        <fullName>I(C)</fullName>
    </alternativeName>
    <alternativeName>
        <fullName>Ic</fullName>
    </alternativeName>
    <alternativeName>
        <fullName>Protein DKA1</fullName>
    </alternativeName>
    <alternativeName>
        <fullName>Protein NSP1</fullName>
    </alternativeName>
</protein>
<evidence type="ECO:0000269" key="1">
    <source>
    </source>
</evidence>
<evidence type="ECO:0000269" key="2">
    <source>
    </source>
</evidence>
<evidence type="ECO:0000269" key="3">
    <source>
    </source>
</evidence>
<evidence type="ECO:0000305" key="4"/>
<evidence type="ECO:0007829" key="5">
    <source>
        <dbReference type="PDB" id="1WPX"/>
    </source>
</evidence>
<proteinExistence type="evidence at protein level"/>
<gene>
    <name type="primary">TFS1</name>
    <name type="synonym">DKA1</name>
    <name type="synonym">NSP1</name>
    <name type="ordered locus">YLR178C</name>
    <name type="ORF">L9470.19</name>
</gene>
<dbReference type="EMBL" id="X15409">
    <property type="protein sequence ID" value="CAA33456.1"/>
    <property type="molecule type" value="Genomic_DNA"/>
</dbReference>
<dbReference type="EMBL" id="X62105">
    <property type="protein sequence ID" value="CAA44015.1"/>
    <property type="molecule type" value="Genomic_DNA"/>
</dbReference>
<dbReference type="EMBL" id="U17246">
    <property type="protein sequence ID" value="AAB67471.1"/>
    <property type="molecule type" value="Genomic_DNA"/>
</dbReference>
<dbReference type="EMBL" id="BK006945">
    <property type="protein sequence ID" value="DAA09498.1"/>
    <property type="molecule type" value="Genomic_DNA"/>
</dbReference>
<dbReference type="PIR" id="S18843">
    <property type="entry name" value="S18843"/>
</dbReference>
<dbReference type="RefSeq" id="NP_013279.1">
    <property type="nucleotide sequence ID" value="NM_001182065.1"/>
</dbReference>
<dbReference type="PDB" id="1WPX">
    <property type="method" value="X-ray"/>
    <property type="resolution" value="2.70 A"/>
    <property type="chains" value="B=1-219"/>
</dbReference>
<dbReference type="PDBsum" id="1WPX"/>
<dbReference type="SMR" id="P14306"/>
<dbReference type="BioGRID" id="31449">
    <property type="interactions" value="98"/>
</dbReference>
<dbReference type="DIP" id="DIP-669N"/>
<dbReference type="FunCoup" id="P14306">
    <property type="interactions" value="1818"/>
</dbReference>
<dbReference type="IntAct" id="P14306">
    <property type="interactions" value="6"/>
</dbReference>
<dbReference type="MINT" id="P14306"/>
<dbReference type="STRING" id="4932.YLR178C"/>
<dbReference type="MEROPS" id="I51.001"/>
<dbReference type="iPTMnet" id="P14306"/>
<dbReference type="PaxDb" id="4932-YLR178C"/>
<dbReference type="PeptideAtlas" id="P14306"/>
<dbReference type="TopDownProteomics" id="P14306"/>
<dbReference type="EnsemblFungi" id="YLR178C_mRNA">
    <property type="protein sequence ID" value="YLR178C"/>
    <property type="gene ID" value="YLR178C"/>
</dbReference>
<dbReference type="GeneID" id="850875"/>
<dbReference type="KEGG" id="sce:YLR178C"/>
<dbReference type="AGR" id="SGD:S000004168"/>
<dbReference type="SGD" id="S000004168">
    <property type="gene designation" value="TFS1"/>
</dbReference>
<dbReference type="VEuPathDB" id="FungiDB:YLR178C"/>
<dbReference type="eggNOG" id="KOG3346">
    <property type="taxonomic scope" value="Eukaryota"/>
</dbReference>
<dbReference type="GeneTree" id="ENSGT00940000167139"/>
<dbReference type="HOGENOM" id="CLU_043994_3_1_1"/>
<dbReference type="InParanoid" id="P14306"/>
<dbReference type="OMA" id="NWGYGTP"/>
<dbReference type="OrthoDB" id="2506647at2759"/>
<dbReference type="BioCyc" id="YEAST:G3O-32303-MONOMER"/>
<dbReference type="BioGRID-ORCS" id="850875">
    <property type="hits" value="9 hits in 10 CRISPR screens"/>
</dbReference>
<dbReference type="CD-CODE" id="E03F929F">
    <property type="entry name" value="Stress granule"/>
</dbReference>
<dbReference type="EvolutionaryTrace" id="P14306"/>
<dbReference type="PRO" id="PR:P14306"/>
<dbReference type="Proteomes" id="UP000002311">
    <property type="component" value="Chromosome XII"/>
</dbReference>
<dbReference type="RNAct" id="P14306">
    <property type="molecule type" value="protein"/>
</dbReference>
<dbReference type="GO" id="GO:0005737">
    <property type="term" value="C:cytoplasm"/>
    <property type="evidence" value="ECO:0000314"/>
    <property type="project" value="SGD"/>
</dbReference>
<dbReference type="GO" id="GO:0000328">
    <property type="term" value="C:fungal-type vacuole lumen"/>
    <property type="evidence" value="ECO:0000314"/>
    <property type="project" value="SGD"/>
</dbReference>
<dbReference type="GO" id="GO:0000329">
    <property type="term" value="C:fungal-type vacuole membrane"/>
    <property type="evidence" value="ECO:0000314"/>
    <property type="project" value="SGD"/>
</dbReference>
<dbReference type="GO" id="GO:0030414">
    <property type="term" value="F:peptidase inhibitor activity"/>
    <property type="evidence" value="ECO:0000314"/>
    <property type="project" value="SGD"/>
</dbReference>
<dbReference type="GO" id="GO:0005543">
    <property type="term" value="F:phospholipid binding"/>
    <property type="evidence" value="ECO:0000314"/>
    <property type="project" value="SGD"/>
</dbReference>
<dbReference type="GO" id="GO:0004867">
    <property type="term" value="F:serine-type endopeptidase inhibitor activity"/>
    <property type="evidence" value="ECO:0007669"/>
    <property type="project" value="UniProtKB-KW"/>
</dbReference>
<dbReference type="GO" id="GO:0030162">
    <property type="term" value="P:regulation of proteolysis"/>
    <property type="evidence" value="ECO:0000314"/>
    <property type="project" value="SGD"/>
</dbReference>
<dbReference type="GO" id="GO:0046578">
    <property type="term" value="P:regulation of Ras protein signal transduction"/>
    <property type="evidence" value="ECO:0000315"/>
    <property type="project" value="SGD"/>
</dbReference>
<dbReference type="CDD" id="cd00866">
    <property type="entry name" value="PEBP_euk"/>
    <property type="match status" value="1"/>
</dbReference>
<dbReference type="FunFam" id="3.90.280.10:FF:000009">
    <property type="entry name" value="Carboxypeptidase Y inhibitor"/>
    <property type="match status" value="1"/>
</dbReference>
<dbReference type="Gene3D" id="3.90.280.10">
    <property type="entry name" value="PEBP-like"/>
    <property type="match status" value="1"/>
</dbReference>
<dbReference type="InterPro" id="IPR008914">
    <property type="entry name" value="PEBP"/>
</dbReference>
<dbReference type="InterPro" id="IPR036610">
    <property type="entry name" value="PEBP-like_sf"/>
</dbReference>
<dbReference type="InterPro" id="IPR035810">
    <property type="entry name" value="PEBP_euk"/>
</dbReference>
<dbReference type="InterPro" id="IPR001858">
    <property type="entry name" value="Phosphatidylethanolamine-bd_CS"/>
</dbReference>
<dbReference type="PANTHER" id="PTHR11362:SF148">
    <property type="entry name" value="CARBOXYPEPTIDASE Y INHIBITOR"/>
    <property type="match status" value="1"/>
</dbReference>
<dbReference type="PANTHER" id="PTHR11362">
    <property type="entry name" value="PHOSPHATIDYLETHANOLAMINE-BINDING PROTEIN"/>
    <property type="match status" value="1"/>
</dbReference>
<dbReference type="Pfam" id="PF01161">
    <property type="entry name" value="PBP"/>
    <property type="match status" value="1"/>
</dbReference>
<dbReference type="SUPFAM" id="SSF49777">
    <property type="entry name" value="PEBP-like"/>
    <property type="match status" value="1"/>
</dbReference>
<dbReference type="PROSITE" id="PS01220">
    <property type="entry name" value="PBP"/>
    <property type="match status" value="1"/>
</dbReference>
<name>CPYI_YEAST</name>
<sequence length="219" mass="24357">MNQAIDFAQASIDSYKKHGILEDVIHDTSFQPSGILAVEYSSSAPVAMGNTLPTEKARSKPQFQFTFNKQMQKSVPQANAYVPQDDDLFTLVMTDPDAPSKTDHKWSEFCHLVECDLKLLNEATHETSGATEFFASEFNTKGSNTLIEYMGPAPPKGSGPHRYVFLLYKQPKGVDSSKFSKIKDRPNWGYGTPATGVGKWAKENNLQLVASNFFYAETK</sequence>
<keyword id="KW-0002">3D-structure</keyword>
<keyword id="KW-0007">Acetylation</keyword>
<keyword id="KW-0963">Cytoplasm</keyword>
<keyword id="KW-0646">Protease inhibitor</keyword>
<keyword id="KW-1185">Reference proteome</keyword>
<keyword id="KW-0722">Serine protease inhibitor</keyword>